<accession>P13900</accession>
<accession>Q84794</accession>
<accession>Q84795</accession>
<accession>Q84796</accession>
<accession>Q84797</accession>
<accession>Q84798</accession>
<accession>Q84799</accession>
<accession>Q84800</accession>
<accession>Q84801</accession>
<accession>Q84802</accession>
<accession>Q84803</accession>
<accession>Q84804</accession>
<organismHost>
    <name type="scientific">Sus scrofa</name>
    <name type="common">Pig</name>
    <dbReference type="NCBI Taxonomy" id="9823"/>
</organismHost>
<keyword id="KW-0002">3D-structure</keyword>
<keyword id="KW-1072">Activation of host autophagy by virus</keyword>
<keyword id="KW-0067">ATP-binding</keyword>
<keyword id="KW-0068">Autocatalytic cleavage</keyword>
<keyword id="KW-0167">Capsid protein</keyword>
<keyword id="KW-0191">Covalent protein-RNA linkage</keyword>
<keyword id="KW-0235">DNA replication</keyword>
<keyword id="KW-1262">Eukaryotic host gene expression shutoff by virus</keyword>
<keyword id="KW-1193">Eukaryotic host translation shutoff by virus</keyword>
<keyword id="KW-0347">Helicase</keyword>
<keyword id="KW-1035">Host cytoplasm</keyword>
<keyword id="KW-1036">Host cytoplasmic vesicle</keyword>
<keyword id="KW-1190">Host gene expression shutoff by virus</keyword>
<keyword id="KW-1043">Host membrane</keyword>
<keyword id="KW-1192">Host mRNA suppression by virus</keyword>
<keyword id="KW-1048">Host nucleus</keyword>
<keyword id="KW-0945">Host-virus interaction</keyword>
<keyword id="KW-0378">Hydrolase</keyword>
<keyword id="KW-1090">Inhibition of host innate immune response by virus</keyword>
<keyword id="KW-1099">Inhibition of host mRNA nuclear export by virus</keyword>
<keyword id="KW-1088">Inhibition of host RIG-I by virus</keyword>
<keyword id="KW-1113">Inhibition of host RLR pathway by virus</keyword>
<keyword id="KW-0407">Ion channel</keyword>
<keyword id="KW-0406">Ion transport</keyword>
<keyword id="KW-0449">Lipoprotein</keyword>
<keyword id="KW-0460">Magnesium</keyword>
<keyword id="KW-0472">Membrane</keyword>
<keyword id="KW-0479">Metal-binding</keyword>
<keyword id="KW-0519">Myristate</keyword>
<keyword id="KW-0547">Nucleotide-binding</keyword>
<keyword id="KW-0548">Nucleotidyltransferase</keyword>
<keyword id="KW-0597">Phosphoprotein</keyword>
<keyword id="KW-1172">Pore-mediated penetration of viral genome into host cell</keyword>
<keyword id="KW-0645">Protease</keyword>
<keyword id="KW-0677">Repeat</keyword>
<keyword id="KW-0694">RNA-binding</keyword>
<keyword id="KW-0696">RNA-directed RNA polymerase</keyword>
<keyword id="KW-1143">T=pseudo3 icosahedral capsid protein</keyword>
<keyword id="KW-0788">Thiol protease</keyword>
<keyword id="KW-0808">Transferase</keyword>
<keyword id="KW-0813">Transport</keyword>
<keyword id="KW-1161">Viral attachment to host cell</keyword>
<keyword id="KW-0899">Viral immunoevasion</keyword>
<keyword id="KW-1182">Viral ion channel</keyword>
<keyword id="KW-1162">Viral penetration into host cytoplasm</keyword>
<keyword id="KW-0693">Viral RNA replication</keyword>
<keyword id="KW-0946">Virion</keyword>
<keyword id="KW-1164">Virus endocytosis by host</keyword>
<keyword id="KW-1160">Virus entry into host cell</keyword>
<keyword id="KW-0862">Zinc</keyword>
<keyword id="KW-0863">Zinc-finger</keyword>
<protein>
    <recommendedName>
        <fullName>Genome polyprotein</fullName>
    </recommendedName>
    <component>
        <recommendedName>
            <fullName>P1</fullName>
        </recommendedName>
    </component>
    <component>
        <recommendedName>
            <fullName>Capsid protein VP0</fullName>
        </recommendedName>
        <alternativeName>
            <fullName>VP4-VP2</fullName>
        </alternativeName>
    </component>
    <component>
        <recommendedName>
            <fullName>Capsid protein VP4</fullName>
        </recommendedName>
        <alternativeName>
            <fullName>P1A</fullName>
        </alternativeName>
        <alternativeName>
            <fullName>Virion protein 4</fullName>
        </alternativeName>
    </component>
    <component>
        <recommendedName>
            <fullName>Capsid protein VP2</fullName>
        </recommendedName>
        <alternativeName>
            <fullName>P1B</fullName>
        </alternativeName>
        <alternativeName>
            <fullName>Virion protein 2</fullName>
        </alternativeName>
    </component>
    <component>
        <recommendedName>
            <fullName>Capsid protein VP3</fullName>
        </recommendedName>
        <alternativeName>
            <fullName>P1C</fullName>
        </alternativeName>
        <alternativeName>
            <fullName>Virion protein 3</fullName>
        </alternativeName>
    </component>
    <component>
        <recommendedName>
            <fullName>Capsid protein VP1</fullName>
        </recommendedName>
        <alternativeName>
            <fullName>P1D</fullName>
        </alternativeName>
        <alternativeName>
            <fullName>Virion protein 1</fullName>
        </alternativeName>
    </component>
    <component>
        <recommendedName>
            <fullName>P2</fullName>
        </recommendedName>
    </component>
    <component>
        <recommendedName>
            <fullName>Protease 2A</fullName>
            <shortName>P2A</shortName>
            <ecNumber evidence="3">3.4.22.29</ecNumber>
        </recommendedName>
        <alternativeName>
            <fullName>Picornain 2A</fullName>
        </alternativeName>
        <alternativeName>
            <fullName>Protein 2A</fullName>
        </alternativeName>
    </component>
    <component>
        <recommendedName>
            <fullName>Protein 2B</fullName>
            <shortName>P2B</shortName>
        </recommendedName>
    </component>
    <component>
        <recommendedName>
            <fullName>Protein 2C</fullName>
            <shortName>P2C</shortName>
            <ecNumber evidence="3">3.6.1.15</ecNumber>
        </recommendedName>
    </component>
    <component>
        <recommendedName>
            <fullName>P3</fullName>
        </recommendedName>
    </component>
    <component>
        <recommendedName>
            <fullName>Protein 3AB</fullName>
        </recommendedName>
    </component>
    <component>
        <recommendedName>
            <fullName>Protein 3A</fullName>
            <shortName>P3A</shortName>
        </recommendedName>
    </component>
    <component>
        <recommendedName>
            <fullName>Viral protein genome-linked</fullName>
            <shortName>VPg</shortName>
        </recommendedName>
        <alternativeName>
            <fullName>Protein 3B</fullName>
            <shortName>P3B</shortName>
        </alternativeName>
    </component>
    <component>
        <recommendedName>
            <fullName>Protein 3CD</fullName>
            <ecNumber>3.4.22.28</ecNumber>
        </recommendedName>
    </component>
    <component>
        <recommendedName>
            <fullName evidence="13">Protease 3C</fullName>
            <ecNumber evidence="13">3.4.22.28</ecNumber>
        </recommendedName>
        <alternativeName>
            <fullName evidence="13">Picornain 3C</fullName>
            <shortName evidence="13">P3C</shortName>
        </alternativeName>
    </component>
    <component>
        <recommendedName>
            <fullName evidence="11">RNA-directed RNA polymerase</fullName>
            <shortName>RdRp</shortName>
            <ecNumber evidence="11">2.7.7.48</ecNumber>
        </recommendedName>
        <alternativeName>
            <fullName>3D polymerase</fullName>
            <shortName>3Dpol</shortName>
        </alternativeName>
        <alternativeName>
            <fullName>Protein 3D</fullName>
            <shortName>3D</shortName>
        </alternativeName>
    </component>
</protein>
<comment type="function">
    <molecule>Capsid protein VP1</molecule>
    <text evidence="1 3 16">Forms an icosahedral capsid of pseudo T=3 symmetry with capsid proteins VP2 and VP3 (By similarity). The capsid is 300 Angstroms in diameter, composed of 60 copies of each capsid protein and enclosing the viral positive strand RNA genome (By similarity). Capsid protein VP1 mainly forms the vertices of the capsid (By similarity). Capsid protein VP1 interacts with host CXADR to provide virion attachment to target host cells (Probable). This attachment induces virion internalization (By similarity). Tyrosine kinases are probably involved in the entry process (By similarity). After binding to its receptor, the capsid undergoes conformational changes (By similarity). Capsid protein VP1 N-terminus (that contains an amphipathic alpha-helix) and capsid protein VP4 are externalized (By similarity). Together, they shape a pore in the host membrane through which viral genome is translocated to host cell cytoplasm (By similarity).</text>
</comment>
<comment type="function">
    <molecule>Capsid protein VP2</molecule>
    <text evidence="3">Forms an icosahedral capsid of pseudo T=3 symmetry with capsid proteins VP2 and VP3 (By similarity). The capsid is 300 Angstroms in diameter, composed of 60 copies of each capsid protein and enclosing the viral positive strand RNA genome (By similarity).</text>
</comment>
<comment type="function">
    <molecule>Capsid protein VP3</molecule>
    <text evidence="3">Forms an icosahedral capsid of pseudo T=3 symmetry with capsid proteins VP2 and VP3 (By similarity). The capsid is 300 Angstroms in diameter, composed of 60 copies of each capsid protein and enclosing the viral positive strand RNA genome (By similarity).</text>
</comment>
<comment type="function">
    <molecule>Capsid protein VP4</molecule>
    <text evidence="3">Lies on the inner surface of the capsid shell (By similarity). After binding to the host receptor, the capsid undergoes conformational changes (By similarity). Capsid protein VP4 is released, Capsid protein VP1 N-terminus is externalized, and together, they shape a pore in the host membrane through which the viral genome is translocated into the host cell cytoplasm (By similarity).</text>
</comment>
<comment type="function">
    <molecule>Capsid protein VP0</molecule>
    <text evidence="3">Component of immature procapsids, which is cleaved into capsid proteins VP4 and VP2 after maturation (By similarity). Allows the capsid to remain inactive before the maturation step (By similarity).</text>
</comment>
<comment type="function">
    <molecule>Protease 2A</molecule>
    <text evidence="3 6">Cysteine protease that cleaves viral polyprotein and specific host proteins (By similarity). It is responsible for the autocatalytic cleavage between the P1 and P2 regions, which is the first cleavage occurring in the polyprotein (By similarity). Also cleaves the host translation initiation factor EIF4G1, in order to shut down the capped cellular mRNA translation (By similarity). Inhibits the host nucleus-cytoplasm protein and RNA trafficking by cleaving host members of the nuclear pores (By similarity). Counteracts stress granule formation probably by antagonizing its assembly or promoting its dissassembly (By similarity).</text>
</comment>
<comment type="function">
    <molecule>Protein 2B</molecule>
    <text evidence="3">Plays an essential role in the virus replication cycle by acting as a viroporin. Creates a pore in the host endoplasmic reticulum and as a consequence releases Ca2+ in the cytoplasm of infected cell. In turn, high levels of cytoplasmic calcium may trigger membrane trafficking and transport of viral ER-associated proteins to viroplasms, sites of viral genome replication.</text>
</comment>
<comment type="function">
    <molecule>Protein 2C</molecule>
    <text evidence="3">Induces and associates with structural rearrangements of intracellular membranes. Displays RNA-binding, nucleotide binding and NTPase activities. May play a role in virion morphogenesis and viral RNA encapsidation by interacting with the capsid protein VP3.</text>
</comment>
<comment type="function">
    <molecule>Protein 3AB</molecule>
    <text evidence="3">Localizes the viral replication complex to the surface of membranous vesicles. Together with protein 3CD binds the Cis-Active RNA Element (CRE) which is involved in RNA synthesis initiation. Acts as a cofactor to stimulate the activity of 3D polymerase, maybe through a nucleid acid chaperone activity.</text>
</comment>
<comment type="function">
    <molecule>Protein 3A</molecule>
    <text evidence="3 6">Localizes the viral replication complex to the surface of membranous vesicles (By similarity). It inhibits host cell endoplasmic reticulum-to-Golgi apparatus transport and causes the disassembly of the Golgi complex, possibly through GBF1 interaction (By similarity). This would result in depletion of MHC, trail receptors and IFN receptors at the host cell surface (By similarity). Plays an essential role in viral RNA replication by recruiting ACBD3 and PI4KB at the viral replication sites, thereby allowing the formation of the rearranged membranous structures where viral replication takes place (By similarity).</text>
</comment>
<comment type="function">
    <molecule>Viral protein genome-linked</molecule>
    <text evidence="3">Acts as a primer for viral RNA replication and remains covalently bound to viral genomic RNA. VPg is uridylylated prior to priming replication into VPg-pUpU. The oriI viral genomic sequence may act as a template for this. The VPg-pUpU is then used as primer on the genomic RNA poly(A) by the RNA-dependent RNA polymerase to replicate the viral genome. During genome replication, the VPg-RNA linkage is removed by the host TDP2, thereby accelerating replication. During the late stage of the replication cycle, host TDP2 is excluded from sites of viral RNA synthesis and encapsidation, allowing for the generation of progeny virions.</text>
</comment>
<comment type="function">
    <molecule>Protein 3CD</molecule>
    <text evidence="3">Involved in the viral replication complex and viral polypeptide maturation. It exhibits protease activity with a specificity and catalytic efficiency that is different from protease 3C. Protein 3CD lacks polymerase activity. Protein 3CD binds to the 5'UTR of the viral genome.</text>
</comment>
<comment type="function">
    <molecule>RNA-directed RNA polymerase</molecule>
    <text evidence="3">Replicates the viral genomic RNA on the surface of intracellular membranes. May form linear arrays of subunits that propagate along a strong head-to-tail interaction called interface-I. Covalently attaches UMP to a tyrosine of VPg, which is used to prime RNA synthesis. The positive stranded RNA genome is first replicated at virus induced membranous vesicles, creating a dsRNA genomic replication form. This dsRNA is then used as template to synthesize positive stranded RNA genomes. ss(+)RNA genomes are either translated, replicated or encapsidated.</text>
</comment>
<comment type="function">
    <molecule>Protease 3C</molecule>
    <text evidence="3 5">Major viral protease that mediates proteolytic processing of the polyprotein (By similarity). Cleaves host EIF5B, contributing to host translation shutoff (By similarity). Also cleaves host PABPC1, contributing to host translation shutoff (By similarity). Cleaves host NLRP1, triggers host N-glycine-mediated degradation of the autoinhibitory NLRP1 N-terminal fragment (By similarity).</text>
</comment>
<comment type="catalytic activity">
    <molecule>Protein 2C</molecule>
    <reaction evidence="3">
        <text>a ribonucleoside 5'-triphosphate + H2O = a ribonucleoside 5'-diphosphate + phosphate + H(+)</text>
        <dbReference type="Rhea" id="RHEA:23680"/>
        <dbReference type="ChEBI" id="CHEBI:15377"/>
        <dbReference type="ChEBI" id="CHEBI:15378"/>
        <dbReference type="ChEBI" id="CHEBI:43474"/>
        <dbReference type="ChEBI" id="CHEBI:57930"/>
        <dbReference type="ChEBI" id="CHEBI:61557"/>
        <dbReference type="EC" id="3.6.1.15"/>
    </reaction>
</comment>
<comment type="catalytic activity">
    <molecule>Protease 2A</molecule>
    <reaction evidence="3">
        <text>Selective cleavage of Tyr-|-Gly bond in the picornavirus polyprotein.</text>
        <dbReference type="EC" id="3.4.22.29"/>
    </reaction>
</comment>
<comment type="catalytic activity">
    <molecule>RNA-directed RNA polymerase</molecule>
    <reaction evidence="11">
        <text>RNA(n) + a ribonucleoside 5'-triphosphate = RNA(n+1) + diphosphate</text>
        <dbReference type="Rhea" id="RHEA:21248"/>
        <dbReference type="Rhea" id="RHEA-COMP:14527"/>
        <dbReference type="Rhea" id="RHEA-COMP:17342"/>
        <dbReference type="ChEBI" id="CHEBI:33019"/>
        <dbReference type="ChEBI" id="CHEBI:61557"/>
        <dbReference type="ChEBI" id="CHEBI:140395"/>
        <dbReference type="EC" id="2.7.7.48"/>
    </reaction>
</comment>
<comment type="catalytic activity">
    <molecule>Protease 3C</molecule>
    <reaction evidence="13">
        <text>Selective cleavage of Gln-|-Gly bond in the poliovirus polyprotein. In other picornavirus reactions Glu may be substituted for Gln, and Ser or Thr for Gly.</text>
        <dbReference type="EC" id="3.4.22.28"/>
    </reaction>
</comment>
<comment type="cofactor">
    <molecule>RNA-directed RNA polymerase</molecule>
    <cofactor evidence="3">
        <name>Mg(2+)</name>
        <dbReference type="ChEBI" id="CHEBI:18420"/>
    </cofactor>
    <text evidence="3 6">Binds 2 magnesium ions that constitute a dinuclear catalytic metal center (By similarity). The magnesium ions are not prebound but only present for catalysis (By similarity). Requires the presence of 3CDpro or 3CPro (By similarity).</text>
</comment>
<comment type="activity regulation">
    <molecule>RNA-directed RNA polymerase</molecule>
    <text evidence="3">Replication or transcription is subject to high level of random mutations by the nucleotide analog ribavirin.</text>
</comment>
<comment type="subunit">
    <molecule>Capsid protein VP0</molecule>
    <text evidence="3">Interacts with capsid protein VP1 and capsid protein VP3 to form heterotrimeric protomers.</text>
</comment>
<comment type="subunit">
    <molecule>Capsid protein VP1</molecule>
    <text evidence="3 14">Interacts with capsid protein VP0, and capsid protein VP3 to form heterotrimeric protomers (By similarity). Five protomers subsequently associate to form pentamers which serve as building blocks for the capsid (By similarity). Interacts with capsid protein VP2, capsid protein VP3 and capsid protein VP4 following cleavage of capsid protein VP0 (By similarity). Interacts with host CXADR (PubMed:10814575).</text>
</comment>
<comment type="subunit">
    <molecule>Capsid protein VP2</molecule>
    <text evidence="3">Interacts with capsid protein VP1 and capsid protein VP3 in the mature capsid.</text>
</comment>
<comment type="subunit">
    <molecule>Capsid protein VP3</molecule>
    <text evidence="3">Interacts with capsid protein VP0 and capsid protein VP1 to form heterotrimeric protomers (By similarity). Five protomers subsequently associate to form pentamers which serve as building blocks for the capsid (By similarity). Interacts with capsid protein VP4 in the mature capsid (By similarity). Interacts with protein 2C; this interaction may be important for virion morphogenesis (By similarity).</text>
</comment>
<comment type="subunit">
    <molecule>Capsid protein VP4</molecule>
    <text evidence="3">Interacts with capsid protein VP1 and capsid protein VP3.</text>
</comment>
<comment type="subunit">
    <molecule>Protease 2A</molecule>
    <text evidence="7">Homodimer.</text>
</comment>
<comment type="subunit">
    <molecule>Protein 2C</molecule>
    <text evidence="3">Homohexamer; forms a hexameric ring structure with 6-fold symmetry characteristic of AAA+ ATPases (By similarity). Interacts (via N-terminus) with host RTN3 (via reticulon domain); this interaction is important for viral replication (By similarity). Interacts with capsid protein VP3; this interaction may be important for virion morphogenesis (By similarity).</text>
</comment>
<comment type="subunit">
    <molecule>Protein 3AB</molecule>
    <text evidence="3">Interacts with protein 3CD.</text>
</comment>
<comment type="subunit">
    <molecule>Protein 3A</molecule>
    <text evidence="3">Homodimer (By similarity). Interacts with host GBF1 (By similarity). Interacts (via GOLD domain) with host ACBD3 (via GOLD domain); this interaction allows the formation of a viral protein 3A/ACBD3 heterotetramer with a 2:2 stoichiometry, which will stimulate the recruitment of host PI4KB in order to synthesize PI4P at the viral RNA replication sites (By similarity).</text>
</comment>
<comment type="subunit">
    <molecule>Viral protein genome-linked</molecule>
    <text evidence="3">Interacts with RNA-directed RNA polymerase.</text>
</comment>
<comment type="subunit">
    <molecule>Protein 3CD</molecule>
    <text evidence="3">Interacts with protein 3AB and with RNA-directed RNA polymerase.</text>
</comment>
<comment type="subunit">
    <molecule>RNA-directed RNA polymerase</molecule>
    <text evidence="3">Interacts with Viral protein genome-linked and with protein 3CD.</text>
</comment>
<comment type="subcellular location">
    <molecule>Capsid protein VP0</molecule>
    <subcellularLocation>
        <location>Virion</location>
    </subcellularLocation>
    <subcellularLocation>
        <location evidence="15">Host cytoplasm</location>
    </subcellularLocation>
</comment>
<comment type="subcellular location">
    <molecule>Capsid protein VP4</molecule>
    <subcellularLocation>
        <location>Virion</location>
    </subcellularLocation>
</comment>
<comment type="subcellular location">
    <molecule>Capsid protein VP2</molecule>
    <subcellularLocation>
        <location evidence="3">Virion</location>
    </subcellularLocation>
    <subcellularLocation>
        <location evidence="15">Host cytoplasm</location>
    </subcellularLocation>
</comment>
<comment type="subcellular location">
    <molecule>Capsid protein VP3</molecule>
    <subcellularLocation>
        <location evidence="3">Virion</location>
    </subcellularLocation>
    <subcellularLocation>
        <location evidence="15">Host cytoplasm</location>
    </subcellularLocation>
</comment>
<comment type="subcellular location">
    <molecule>Capsid protein VP1</molecule>
    <subcellularLocation>
        <location evidence="3">Virion</location>
    </subcellularLocation>
    <subcellularLocation>
        <location evidence="15">Host cytoplasm</location>
    </subcellularLocation>
</comment>
<comment type="subcellular location">
    <molecule>Protein 2B</molecule>
    <subcellularLocation>
        <location evidence="15">Host cytoplasmic vesicle membrane</location>
        <topology evidence="15">Peripheral membrane protein</topology>
        <orientation evidence="15">Cytoplasmic side</orientation>
    </subcellularLocation>
    <text>Probably localizes to the surface of intracellular membrane vesicles that are induced after virus infection as the site for viral RNA replication. These vesicles are derived from the endoplasmic reticulum.</text>
</comment>
<comment type="subcellular location">
    <molecule>Protein 2C</molecule>
    <subcellularLocation>
        <location evidence="15">Host cytoplasmic vesicle membrane</location>
        <topology evidence="15">Peripheral membrane protein</topology>
        <orientation evidence="15">Cytoplasmic side</orientation>
    </subcellularLocation>
    <text>Probably localizes to the surface of intracellular membrane vesicles that are induced after virus infection as the site for viral RNA replication. These vesicles are derived from the endoplasmic reticulum.</text>
</comment>
<comment type="subcellular location">
    <molecule>Protein 3A</molecule>
    <subcellularLocation>
        <location evidence="15">Host cytoplasmic vesicle membrane</location>
        <topology evidence="15">Peripheral membrane protein</topology>
        <orientation evidence="15">Cytoplasmic side</orientation>
    </subcellularLocation>
    <text>Probably localizes to the surface of intracellular membrane vesicles that are induced after virus infection as the site for viral RNA replication. These vesicles are derived from the endoplasmic reticulum.</text>
</comment>
<comment type="subcellular location">
    <molecule>Protein 3AB</molecule>
    <subcellularLocation>
        <location evidence="15">Host cytoplasmic vesicle membrane</location>
        <topology evidence="15">Peripheral membrane protein</topology>
        <orientation evidence="15">Cytoplasmic side</orientation>
    </subcellularLocation>
    <text>Probably localizes to the surface of intracellular membrane vesicles that are induced after virus infection as the site for viral RNA replication. These vesicles are derived from the endoplasmic reticulum.</text>
</comment>
<comment type="subcellular location">
    <molecule>Viral protein genome-linked</molecule>
    <subcellularLocation>
        <location evidence="3">Virion</location>
    </subcellularLocation>
    <subcellularLocation>
        <location evidence="8">Host cytoplasm</location>
    </subcellularLocation>
</comment>
<comment type="subcellular location">
    <molecule>Protease 3C</molecule>
    <subcellularLocation>
        <location>Host cytoplasm</location>
    </subcellularLocation>
</comment>
<comment type="subcellular location">
    <molecule>Protein 3CD</molecule>
    <subcellularLocation>
        <location evidence="3">Host nucleus</location>
    </subcellularLocation>
    <subcellularLocation>
        <location evidence="3">Host cytoplasm</location>
    </subcellularLocation>
    <subcellularLocation>
        <location evidence="15">Host cytoplasmic vesicle membrane</location>
        <topology evidence="15">Peripheral membrane protein</topology>
        <orientation evidence="15">Cytoplasmic side</orientation>
    </subcellularLocation>
    <text>Probably localizes to the surface of intracellular membrane vesicles that are induced after virus infection as the site for viral RNA replication. These vesicles are derived from the endoplasmic reticulum.</text>
</comment>
<comment type="subcellular location">
    <molecule>RNA-directed RNA polymerase</molecule>
    <subcellularLocation>
        <location evidence="15">Host cytoplasmic vesicle membrane</location>
        <topology evidence="15">Peripheral membrane protein</topology>
        <orientation evidence="15">Cytoplasmic side</orientation>
    </subcellularLocation>
    <text>Probably localizes to the surface of intracellular membrane vesicles that are induced after virus infection as the site for viral RNA replication. These vesicles are derived from the endoplasmic reticulum.</text>
</comment>
<comment type="domain">
    <molecule>Protein 2C</molecule>
    <text evidence="2 3">The N-terminus has membrane-binding (By similarity). The N-terminus also displays RNA-binding properties (By similarity). The N-terminus is involved in oligomerization (By similarity). The central part contains an ATPase domain and a degenerate C4-type zinc-finger with only 3 cysteines (By similarity). The C-terminus is involved in RNA-binding (By similarity). The extreme C-terminus contains a region involved in oligomerization (By similarity).</text>
</comment>
<comment type="PTM">
    <molecule>Genome polyprotein</molecule>
    <text evidence="3">Specific enzymatic cleavages in vivo by the viral proteases yield processing intermediates and the mature proteins.</text>
</comment>
<comment type="PTM">
    <molecule>Capsid protein VP0</molecule>
    <text evidence="3">Myristoylation is required for the formation of pentamers during virus assembly. Further assembly of 12 pentamers and a molecule of genomic RNA generates the provirion.</text>
</comment>
<comment type="PTM">
    <molecule>Capsid protein VP0</molecule>
    <text evidence="3">During virion maturation, immature virions are rendered infectious following cleavage of VP0 into VP4 and VP2. This maturation seems to be an autocatalytic event triggered by the presence of RNA in the capsid and it is followed by a conformational change infectious virion.</text>
</comment>
<comment type="PTM">
    <molecule>Capsid protein VP4</molecule>
    <text evidence="3">Myristoylation is required during RNA encapsidation and formation of the mature virus particle.</text>
</comment>
<comment type="PTM">
    <molecule>Viral protein genome-linked</molecule>
    <text evidence="3">VPg is uridylylated by the polymerase into VPg-pUpU. This acts as a nucleotide-peptide primer for the genomic RNA replication.</text>
</comment>
<comment type="similarity">
    <text evidence="15">Belongs to the picornaviruses polyprotein family.</text>
</comment>
<comment type="online information" name="Virus Particle ExploreR db">
    <link uri="https://viperdb.org/Info_Page.php?VDB=1oop"/>
    <text>Icosahedral capsid structure</text>
</comment>
<evidence type="ECO:0000250" key="1"/>
<evidence type="ECO:0000250" key="2">
    <source>
        <dbReference type="UniProtKB" id="B9VUU3"/>
    </source>
</evidence>
<evidence type="ECO:0000250" key="3">
    <source>
        <dbReference type="UniProtKB" id="P03300"/>
    </source>
</evidence>
<evidence type="ECO:0000250" key="4">
    <source>
        <dbReference type="UniProtKB" id="P03301"/>
    </source>
</evidence>
<evidence type="ECO:0000250" key="5">
    <source>
        <dbReference type="UniProtKB" id="P03303"/>
    </source>
</evidence>
<evidence type="ECO:0000250" key="6">
    <source>
        <dbReference type="UniProtKB" id="P03313"/>
    </source>
</evidence>
<evidence type="ECO:0000250" key="7">
    <source>
        <dbReference type="UniProtKB" id="P04936"/>
    </source>
</evidence>
<evidence type="ECO:0000250" key="8">
    <source>
        <dbReference type="UniProtKB" id="Q66478"/>
    </source>
</evidence>
<evidence type="ECO:0000250" key="9">
    <source>
        <dbReference type="UniProtKB" id="Q9QF31"/>
    </source>
</evidence>
<evidence type="ECO:0000255" key="10"/>
<evidence type="ECO:0000255" key="11">
    <source>
        <dbReference type="PROSITE-ProRule" id="PRU00539"/>
    </source>
</evidence>
<evidence type="ECO:0000255" key="12">
    <source>
        <dbReference type="PROSITE-ProRule" id="PRU00551"/>
    </source>
</evidence>
<evidence type="ECO:0000255" key="13">
    <source>
        <dbReference type="PROSITE-ProRule" id="PRU01222"/>
    </source>
</evidence>
<evidence type="ECO:0000269" key="14">
    <source>
    </source>
</evidence>
<evidence type="ECO:0000305" key="15"/>
<evidence type="ECO:0000305" key="16">
    <source>
    </source>
</evidence>
<evidence type="ECO:0007829" key="17">
    <source>
        <dbReference type="PDB" id="1OOP"/>
    </source>
</evidence>
<reference key="1">
    <citation type="journal article" date="1990" name="Virus Res.">
        <title>The complete nucleotide sequence of a pathogenic swine vesicular disease virus.</title>
        <authorList>
            <person name="Seechurn P."/>
            <person name="Knowles N.J."/>
            <person name="McCauley J.W."/>
        </authorList>
    </citation>
    <scope>NUCLEOTIDE SEQUENCE [GENOMIC RNA]</scope>
</reference>
<reference key="2">
    <citation type="journal article" date="2000" name="Virology">
        <title>The coxsackie-adenovirus receptor (CAR) is used by reference strains and clinical isolates representing all six serotypes of coxsackievirus group B and by swine vesicular disease virus.</title>
        <authorList>
            <person name="Martino T.A."/>
            <person name="Petric M."/>
            <person name="Weingartl H."/>
            <person name="Bergelson J.M."/>
            <person name="Opavsky M.A."/>
            <person name="Richardson C.D."/>
            <person name="Modlin J.F."/>
            <person name="Finberg R.W."/>
            <person name="Kain K.C."/>
            <person name="Willis N."/>
            <person name="Gauntt C.J."/>
            <person name="Liu P.P."/>
        </authorList>
    </citation>
    <scope>INTERACTION WITH HOST CXADR (CAPSID PROTEIN VP1)</scope>
</reference>
<reference key="3">
    <citation type="journal article" date="2003" name="J. Virol.">
        <title>Crystal structure of Swine vesicular disease virus and implications for host adaptation.</title>
        <authorList>
            <person name="Fry E.E."/>
            <person name="Knowles N.J."/>
            <person name="Newman J.W."/>
            <person name="Wilsden G."/>
            <person name="Rao Z."/>
            <person name="King A.M."/>
            <person name="Stuart D.I."/>
        </authorList>
    </citation>
    <scope>X-RAY CRYSTALLOGRAPHY (3.0 ANGSTROMS) OF 71-851</scope>
</reference>
<name>POLG_SVDVU</name>
<feature type="initiator methionine" description="Removed; by host" evidence="3">
    <location>
        <position position="1"/>
    </location>
</feature>
<feature type="chain" id="PRO_0000426686" description="Genome polyprotein">
    <location>
        <begin position="2"/>
        <end position="2185"/>
    </location>
</feature>
<feature type="chain" id="PRO_0000426687" description="P1">
    <location>
        <begin position="2"/>
        <end position="851"/>
    </location>
</feature>
<feature type="chain" id="PRO_0000426688" description="Capsid protein VP0">
    <location>
        <begin position="2"/>
        <end position="330"/>
    </location>
</feature>
<feature type="chain" id="PRO_0000426689" description="Capsid protein VP4">
    <location>
        <begin position="2"/>
        <end position="69"/>
    </location>
</feature>
<feature type="chain" id="PRO_0000426690" description="Capsid protein VP2">
    <location>
        <begin position="70"/>
        <end position="330"/>
    </location>
</feature>
<feature type="chain" id="PRO_0000426691" description="Capsid protein VP3">
    <location>
        <begin position="331"/>
        <end position="568"/>
    </location>
</feature>
<feature type="chain" id="PRO_0000426692" description="Capsid protein VP1">
    <location>
        <begin position="569"/>
        <end position="851"/>
    </location>
</feature>
<feature type="chain" id="PRO_0000426693" description="P2">
    <location>
        <begin position="852"/>
        <end position="1429"/>
    </location>
</feature>
<feature type="chain" id="PRO_0000426694" description="Protease 2A">
    <location>
        <begin position="852"/>
        <end position="1001"/>
    </location>
</feature>
<feature type="chain" id="PRO_0000040162" description="Protein 2B">
    <location>
        <begin position="1002"/>
        <end position="1100"/>
    </location>
</feature>
<feature type="chain" id="PRO_0000040163" description="Protein 2C">
    <location>
        <begin position="1101"/>
        <end position="1429"/>
    </location>
</feature>
<feature type="chain" id="PRO_0000426695" description="P3">
    <location>
        <begin position="1430"/>
        <end position="2185"/>
    </location>
</feature>
<feature type="chain" id="PRO_0000426696" description="Protein 3AB">
    <location>
        <begin position="1430"/>
        <end position="1540"/>
    </location>
</feature>
<feature type="chain" id="PRO_0000040164" description="Protein 3A">
    <location>
        <begin position="1430"/>
        <end position="1518"/>
    </location>
</feature>
<feature type="chain" id="PRO_0000426697" description="Viral protein genome-linked">
    <location>
        <begin position="1519"/>
        <end position="1540"/>
    </location>
</feature>
<feature type="chain" id="PRO_0000426698" description="Protein 3CD">
    <location>
        <begin position="1541"/>
        <end position="2185"/>
    </location>
</feature>
<feature type="chain" id="PRO_0000426699" description="Protease 3C">
    <location>
        <begin position="1541"/>
        <end position="1723"/>
    </location>
</feature>
<feature type="chain" id="PRO_0000426700" description="RNA-directed RNA polymerase">
    <location>
        <begin position="1724"/>
        <end position="2185"/>
    </location>
</feature>
<feature type="topological domain" description="Cytoplasmic" evidence="10">
    <location>
        <begin position="2"/>
        <end position="1495"/>
    </location>
</feature>
<feature type="intramembrane region" evidence="10">
    <location>
        <begin position="1496"/>
        <end position="1511"/>
    </location>
</feature>
<feature type="topological domain" description="Cytoplasmic" evidence="10">
    <location>
        <begin position="1512"/>
        <end position="2185"/>
    </location>
</feature>
<feature type="domain" description="SF3 helicase" evidence="12">
    <location>
        <begin position="1205"/>
        <end position="1361"/>
    </location>
</feature>
<feature type="domain" description="Peptidase C3" evidence="13">
    <location>
        <begin position="1541"/>
        <end position="1719"/>
    </location>
</feature>
<feature type="domain" description="RdRp catalytic" evidence="11">
    <location>
        <begin position="1950"/>
        <end position="2066"/>
    </location>
</feature>
<feature type="zinc finger region" description="C4-type; degenerate" evidence="2">
    <location>
        <begin position="1369"/>
        <end position="1386"/>
    </location>
</feature>
<feature type="region of interest" description="Amphipathic alpha-helix" evidence="10">
    <location>
        <begin position="566"/>
        <end position="582"/>
    </location>
</feature>
<feature type="region of interest" description="Oligomerization" evidence="3">
    <location>
        <begin position="1101"/>
        <end position="1239"/>
    </location>
</feature>
<feature type="region of interest" description="Membrane-binding" evidence="3">
    <location>
        <begin position="1101"/>
        <end position="1173"/>
    </location>
</feature>
<feature type="region of interest" description="RNA-binding" evidence="3">
    <location>
        <begin position="1122"/>
        <end position="1126"/>
    </location>
</feature>
<feature type="region of interest" description="RNA-binding" evidence="3">
    <location>
        <begin position="1413"/>
        <end position="1420"/>
    </location>
</feature>
<feature type="region of interest" description="Oligomerization" evidence="3">
    <location>
        <begin position="1424"/>
        <end position="1429"/>
    </location>
</feature>
<feature type="active site" description="For protease 2A activity" evidence="3">
    <location>
        <position position="872"/>
    </location>
</feature>
<feature type="active site" description="For protease 2A activity" evidence="3">
    <location>
        <position position="890"/>
    </location>
</feature>
<feature type="active site" description="For protease 2A activity" evidence="3">
    <location>
        <position position="961"/>
    </location>
</feature>
<feature type="active site" description="For protease 3C activity" evidence="13">
    <location>
        <position position="1580"/>
    </location>
</feature>
<feature type="active site" description="For protease 3C activity" evidence="13">
    <location>
        <position position="1611"/>
    </location>
</feature>
<feature type="active site" description="For protease 3C activity" evidence="13">
    <location>
        <position position="1687"/>
    </location>
</feature>
<feature type="binding site" evidence="9">
    <location>
        <position position="907"/>
    </location>
    <ligand>
        <name>Zn(2+)</name>
        <dbReference type="ChEBI" id="CHEBI:29105"/>
        <label>1</label>
        <note>structural</note>
    </ligand>
</feature>
<feature type="binding site" evidence="9">
    <location>
        <position position="909"/>
    </location>
    <ligand>
        <name>Zn(2+)</name>
        <dbReference type="ChEBI" id="CHEBI:29105"/>
        <label>1</label>
        <note>structural</note>
    </ligand>
</feature>
<feature type="binding site" evidence="9">
    <location>
        <position position="967"/>
    </location>
    <ligand>
        <name>Zn(2+)</name>
        <dbReference type="ChEBI" id="CHEBI:29105"/>
        <label>1</label>
        <note>structural</note>
    </ligand>
</feature>
<feature type="binding site" evidence="9">
    <location>
        <position position="969"/>
    </location>
    <ligand>
        <name>Zn(2+)</name>
        <dbReference type="ChEBI" id="CHEBI:29105"/>
        <label>1</label>
        <note>structural</note>
    </ligand>
</feature>
<feature type="binding site" evidence="2">
    <location>
        <position position="1369"/>
    </location>
    <ligand>
        <name>Zn(2+)</name>
        <dbReference type="ChEBI" id="CHEBI:29105"/>
        <label>2</label>
    </ligand>
</feature>
<feature type="binding site" evidence="2">
    <location>
        <position position="1381"/>
    </location>
    <ligand>
        <name>Zn(2+)</name>
        <dbReference type="ChEBI" id="CHEBI:29105"/>
        <label>2</label>
    </ligand>
</feature>
<feature type="binding site" evidence="2">
    <location>
        <position position="1386"/>
    </location>
    <ligand>
        <name>Zn(2+)</name>
        <dbReference type="ChEBI" id="CHEBI:29105"/>
        <label>2</label>
    </ligand>
</feature>
<feature type="binding site" evidence="3">
    <location>
        <position position="1956"/>
    </location>
    <ligand>
        <name>Mg(2+)</name>
        <dbReference type="ChEBI" id="CHEBI:18420"/>
        <label>1</label>
        <note>catalytic; for RdRp activity</note>
    </ligand>
</feature>
<feature type="binding site" evidence="3">
    <location>
        <position position="1956"/>
    </location>
    <ligand>
        <name>Mg(2+)</name>
        <dbReference type="ChEBI" id="CHEBI:18420"/>
        <label>2</label>
        <note>catalytic; for RdRp activity</note>
    </ligand>
</feature>
<feature type="binding site" evidence="3">
    <location>
        <position position="2052"/>
    </location>
    <ligand>
        <name>Mg(2+)</name>
        <dbReference type="ChEBI" id="CHEBI:18420"/>
        <label>1</label>
        <note>catalytic; for RdRp activity</note>
    </ligand>
</feature>
<feature type="binding site" evidence="3">
    <location>
        <position position="2052"/>
    </location>
    <ligand>
        <name>Mg(2+)</name>
        <dbReference type="ChEBI" id="CHEBI:18420"/>
        <label>2</label>
        <note>catalytic; for RdRp activity</note>
    </ligand>
</feature>
<feature type="site" description="Cleavage; by autolysis" evidence="3">
    <location>
        <begin position="69"/>
        <end position="70"/>
    </location>
</feature>
<feature type="site" description="Cleavage; by protease 3C" evidence="4">
    <location>
        <begin position="330"/>
        <end position="331"/>
    </location>
</feature>
<feature type="site" description="Cleavage; by autolysis" evidence="4">
    <location>
        <begin position="851"/>
        <end position="852"/>
    </location>
</feature>
<feature type="site" description="Cleavage; by protease 3C" evidence="4">
    <location>
        <begin position="1001"/>
        <end position="1002"/>
    </location>
</feature>
<feature type="site" description="Cleavage; by protease 3C" evidence="4">
    <location>
        <begin position="1100"/>
        <end position="1101"/>
    </location>
</feature>
<feature type="site" description="Involved in the interaction with host RTN3" evidence="8">
    <location>
        <position position="1125"/>
    </location>
</feature>
<feature type="site" description="Cleavage; by protease 3C" evidence="4">
    <location>
        <begin position="1429"/>
        <end position="1430"/>
    </location>
</feature>
<feature type="site" description="Cleavage; by protease 3C" evidence="4">
    <location>
        <begin position="1518"/>
        <end position="1519"/>
    </location>
</feature>
<feature type="site" description="Cleavage; by protease 3C" evidence="4">
    <location>
        <begin position="1540"/>
        <end position="1541"/>
    </location>
</feature>
<feature type="site" description="Cleavage; by protease 3C" evidence="4">
    <location>
        <begin position="1723"/>
        <end position="1724"/>
    </location>
</feature>
<feature type="modified residue" description="O-(5'-phospho-RNA)-tyrosine" evidence="3">
    <location>
        <position position="1521"/>
    </location>
</feature>
<feature type="lipid moiety-binding region" description="N-myristoyl glycine; by host" evidence="3">
    <location>
        <position position="2"/>
    </location>
</feature>
<feature type="strand" evidence="17">
    <location>
        <begin position="33"/>
        <end position="35"/>
    </location>
</feature>
<feature type="helix" evidence="17">
    <location>
        <begin position="36"/>
        <end position="38"/>
    </location>
</feature>
<feature type="helix" evidence="17">
    <location>
        <begin position="51"/>
        <end position="54"/>
    </location>
</feature>
<feature type="strand" evidence="17">
    <location>
        <begin position="63"/>
        <end position="65"/>
    </location>
</feature>
<feature type="strand" evidence="17">
    <location>
        <begin position="83"/>
        <end position="87"/>
    </location>
</feature>
<feature type="strand" evidence="17">
    <location>
        <begin position="90"/>
        <end position="96"/>
    </location>
</feature>
<feature type="turn" evidence="17">
    <location>
        <begin position="113"/>
        <end position="115"/>
    </location>
</feature>
<feature type="turn" evidence="17">
    <location>
        <begin position="127"/>
        <end position="129"/>
    </location>
</feature>
<feature type="strand" evidence="17">
    <location>
        <begin position="138"/>
        <end position="140"/>
    </location>
</feature>
<feature type="strand" evidence="17">
    <location>
        <begin position="147"/>
        <end position="151"/>
    </location>
</feature>
<feature type="helix" evidence="17">
    <location>
        <begin position="153"/>
        <end position="155"/>
    </location>
</feature>
<feature type="helix" evidence="17">
    <location>
        <begin position="159"/>
        <end position="167"/>
    </location>
</feature>
<feature type="strand" evidence="17">
    <location>
        <begin position="168"/>
        <end position="180"/>
    </location>
</feature>
<feature type="strand" evidence="17">
    <location>
        <begin position="188"/>
        <end position="198"/>
    </location>
</feature>
<feature type="strand" evidence="17">
    <location>
        <begin position="203"/>
        <end position="205"/>
    </location>
</feature>
<feature type="helix" evidence="17">
    <location>
        <begin position="212"/>
        <end position="215"/>
    </location>
</feature>
<feature type="strand" evidence="17">
    <location>
        <begin position="225"/>
        <end position="227"/>
    </location>
</feature>
<feature type="helix" evidence="17">
    <location>
        <begin position="239"/>
        <end position="241"/>
    </location>
</feature>
<feature type="turn" evidence="17">
    <location>
        <begin position="242"/>
        <end position="244"/>
    </location>
</feature>
<feature type="helix" evidence="17">
    <location>
        <begin position="248"/>
        <end position="253"/>
    </location>
</feature>
<feature type="strand" evidence="17">
    <location>
        <begin position="254"/>
        <end position="260"/>
    </location>
</feature>
<feature type="turn" evidence="17">
    <location>
        <begin position="261"/>
        <end position="263"/>
    </location>
</feature>
<feature type="strand" evidence="17">
    <location>
        <begin position="265"/>
        <end position="271"/>
    </location>
</feature>
<feature type="strand" evidence="17">
    <location>
        <begin position="276"/>
        <end position="278"/>
    </location>
</feature>
<feature type="turn" evidence="17">
    <location>
        <begin position="282"/>
        <end position="284"/>
    </location>
</feature>
<feature type="strand" evidence="17">
    <location>
        <begin position="288"/>
        <end position="299"/>
    </location>
</feature>
<feature type="strand" evidence="17">
    <location>
        <begin position="308"/>
        <end position="324"/>
    </location>
</feature>
<feature type="turn" evidence="17">
    <location>
        <begin position="338"/>
        <end position="341"/>
    </location>
</feature>
<feature type="strand" evidence="17">
    <location>
        <begin position="353"/>
        <end position="355"/>
    </location>
</feature>
<feature type="helix" evidence="17">
    <location>
        <begin position="373"/>
        <end position="377"/>
    </location>
</feature>
<feature type="helix" evidence="17">
    <location>
        <begin position="391"/>
        <end position="393"/>
    </location>
</feature>
<feature type="helix" evidence="17">
    <location>
        <begin position="395"/>
        <end position="398"/>
    </location>
</feature>
<feature type="strand" evidence="17">
    <location>
        <begin position="400"/>
        <end position="403"/>
    </location>
</feature>
<feature type="strand" evidence="17">
    <location>
        <begin position="406"/>
        <end position="409"/>
    </location>
</feature>
<feature type="strand" evidence="17">
    <location>
        <begin position="411"/>
        <end position="417"/>
    </location>
</feature>
<feature type="turn" evidence="17">
    <location>
        <begin position="419"/>
        <end position="421"/>
    </location>
</feature>
<feature type="turn" evidence="17">
    <location>
        <begin position="423"/>
        <end position="427"/>
    </location>
</feature>
<feature type="helix" evidence="17">
    <location>
        <begin position="429"/>
        <end position="434"/>
    </location>
</feature>
<feature type="strand" evidence="17">
    <location>
        <begin position="437"/>
        <end position="441"/>
    </location>
</feature>
<feature type="strand" evidence="17">
    <location>
        <begin position="444"/>
        <end position="450"/>
    </location>
</feature>
<feature type="strand" evidence="17">
    <location>
        <begin position="459"/>
        <end position="465"/>
    </location>
</feature>
<feature type="strand" evidence="17">
    <location>
        <begin position="467"/>
        <end position="469"/>
    </location>
</feature>
<feature type="helix" evidence="17">
    <location>
        <begin position="475"/>
        <end position="478"/>
    </location>
</feature>
<feature type="strand" evidence="17">
    <location>
        <begin position="481"/>
        <end position="487"/>
    </location>
</feature>
<feature type="strand" evidence="17">
    <location>
        <begin position="493"/>
        <end position="498"/>
    </location>
</feature>
<feature type="strand" evidence="17">
    <location>
        <begin position="503"/>
        <end position="505"/>
    </location>
</feature>
<feature type="strand" evidence="17">
    <location>
        <begin position="519"/>
        <end position="526"/>
    </location>
</feature>
<feature type="strand" evidence="17">
    <location>
        <begin position="536"/>
        <end position="546"/>
    </location>
</feature>
<feature type="strand" evidence="17">
    <location>
        <begin position="551"/>
        <end position="555"/>
    </location>
</feature>
<feature type="strand" evidence="17">
    <location>
        <begin position="597"/>
        <end position="600"/>
    </location>
</feature>
<feature type="helix" evidence="17">
    <location>
        <begin position="602"/>
        <end position="604"/>
    </location>
</feature>
<feature type="helix" evidence="17">
    <location>
        <begin position="612"/>
        <end position="614"/>
    </location>
</feature>
<feature type="helix" evidence="17">
    <location>
        <begin position="628"/>
        <end position="630"/>
    </location>
</feature>
<feature type="helix" evidence="17">
    <location>
        <begin position="632"/>
        <end position="636"/>
    </location>
</feature>
<feature type="strand" evidence="17">
    <location>
        <begin position="640"/>
        <end position="651"/>
    </location>
</feature>
<feature type="strand" evidence="17">
    <location>
        <begin position="657"/>
        <end position="661"/>
    </location>
</feature>
<feature type="helix" evidence="17">
    <location>
        <begin position="668"/>
        <end position="674"/>
    </location>
</feature>
<feature type="strand" evidence="17">
    <location>
        <begin position="677"/>
        <end position="694"/>
    </location>
</feature>
<feature type="strand" evidence="17">
    <location>
        <begin position="708"/>
        <end position="714"/>
    </location>
</feature>
<feature type="helix" evidence="17">
    <location>
        <begin position="727"/>
        <end position="730"/>
    </location>
</feature>
<feature type="strand" evidence="17">
    <location>
        <begin position="732"/>
        <end position="734"/>
    </location>
</feature>
<feature type="strand" evidence="17">
    <location>
        <begin position="736"/>
        <end position="740"/>
    </location>
</feature>
<feature type="strand" evidence="17">
    <location>
        <begin position="747"/>
        <end position="750"/>
    </location>
</feature>
<feature type="strand" evidence="17">
    <location>
        <begin position="755"/>
        <end position="761"/>
    </location>
</feature>
<feature type="strand" evidence="17">
    <location>
        <begin position="765"/>
        <end position="768"/>
    </location>
</feature>
<feature type="helix" evidence="17">
    <location>
        <begin position="777"/>
        <end position="779"/>
    </location>
</feature>
<feature type="strand" evidence="17">
    <location>
        <begin position="785"/>
        <end position="792"/>
    </location>
</feature>
<feature type="strand" evidence="17">
    <location>
        <begin position="799"/>
        <end position="817"/>
    </location>
</feature>
<feature type="strand" evidence="17">
    <location>
        <begin position="828"/>
        <end position="830"/>
    </location>
</feature>
<proteinExistence type="evidence at protein level"/>
<dbReference type="EC" id="3.4.22.29" evidence="3"/>
<dbReference type="EC" id="3.6.1.15" evidence="3"/>
<dbReference type="EC" id="3.4.22.28" evidence="13"/>
<dbReference type="EC" id="2.7.7.48" evidence="11"/>
<dbReference type="EMBL" id="X54521">
    <property type="protein sequence ID" value="CAA38377.1"/>
    <property type="molecule type" value="Genomic_RNA"/>
</dbReference>
<dbReference type="PIR" id="S11670">
    <property type="entry name" value="GNNYSV"/>
</dbReference>
<dbReference type="PDB" id="1OOP">
    <property type="method" value="X-ray"/>
    <property type="resolution" value="3.00 A"/>
    <property type="chains" value="A=569-851, B=70-330, C=331-568, D=1-69"/>
</dbReference>
<dbReference type="PDBsum" id="1OOP"/>
<dbReference type="SMR" id="P13900"/>
<dbReference type="DrugBank" id="DB08231">
    <property type="generic name" value="Myristic acid"/>
</dbReference>
<dbReference type="DrugBank" id="DB03203">
    <property type="generic name" value="Sphingosine"/>
</dbReference>
<dbReference type="MEROPS" id="C03.020"/>
<dbReference type="MEROPS" id="N08.001"/>
<dbReference type="EvolutionaryTrace" id="P13900"/>
<dbReference type="Proteomes" id="UP000007234">
    <property type="component" value="Genome"/>
</dbReference>
<dbReference type="GO" id="GO:0044162">
    <property type="term" value="C:host cell cytoplasmic vesicle membrane"/>
    <property type="evidence" value="ECO:0007669"/>
    <property type="project" value="UniProtKB-SubCell"/>
</dbReference>
<dbReference type="GO" id="GO:0042025">
    <property type="term" value="C:host cell nucleus"/>
    <property type="evidence" value="ECO:0007669"/>
    <property type="project" value="UniProtKB-SubCell"/>
</dbReference>
<dbReference type="GO" id="GO:0016020">
    <property type="term" value="C:membrane"/>
    <property type="evidence" value="ECO:0007669"/>
    <property type="project" value="UniProtKB-KW"/>
</dbReference>
<dbReference type="GO" id="GO:0039618">
    <property type="term" value="C:T=pseudo3 icosahedral viral capsid"/>
    <property type="evidence" value="ECO:0007669"/>
    <property type="project" value="UniProtKB-KW"/>
</dbReference>
<dbReference type="GO" id="GO:0005524">
    <property type="term" value="F:ATP binding"/>
    <property type="evidence" value="ECO:0007669"/>
    <property type="project" value="UniProtKB-KW"/>
</dbReference>
<dbReference type="GO" id="GO:0016887">
    <property type="term" value="F:ATP hydrolysis activity"/>
    <property type="evidence" value="ECO:0007669"/>
    <property type="project" value="InterPro"/>
</dbReference>
<dbReference type="GO" id="GO:0015267">
    <property type="term" value="F:channel activity"/>
    <property type="evidence" value="ECO:0007669"/>
    <property type="project" value="UniProtKB-KW"/>
</dbReference>
<dbReference type="GO" id="GO:0004197">
    <property type="term" value="F:cysteine-type endopeptidase activity"/>
    <property type="evidence" value="ECO:0007669"/>
    <property type="project" value="UniProtKB-EC"/>
</dbReference>
<dbReference type="GO" id="GO:0003723">
    <property type="term" value="F:RNA binding"/>
    <property type="evidence" value="ECO:0007669"/>
    <property type="project" value="UniProtKB-KW"/>
</dbReference>
<dbReference type="GO" id="GO:0003724">
    <property type="term" value="F:RNA helicase activity"/>
    <property type="evidence" value="ECO:0007669"/>
    <property type="project" value="InterPro"/>
</dbReference>
<dbReference type="GO" id="GO:0003968">
    <property type="term" value="F:RNA-directed RNA polymerase activity"/>
    <property type="evidence" value="ECO:0007669"/>
    <property type="project" value="UniProtKB-KW"/>
</dbReference>
<dbReference type="GO" id="GO:0005198">
    <property type="term" value="F:structural molecule activity"/>
    <property type="evidence" value="ECO:0007669"/>
    <property type="project" value="InterPro"/>
</dbReference>
<dbReference type="GO" id="GO:0008270">
    <property type="term" value="F:zinc ion binding"/>
    <property type="evidence" value="ECO:0007669"/>
    <property type="project" value="UniProtKB-KW"/>
</dbReference>
<dbReference type="GO" id="GO:0006260">
    <property type="term" value="P:DNA replication"/>
    <property type="evidence" value="ECO:0007669"/>
    <property type="project" value="UniProtKB-KW"/>
</dbReference>
<dbReference type="GO" id="GO:0006351">
    <property type="term" value="P:DNA-templated transcription"/>
    <property type="evidence" value="ECO:0007669"/>
    <property type="project" value="InterPro"/>
</dbReference>
<dbReference type="GO" id="GO:0075509">
    <property type="term" value="P:endocytosis involved in viral entry into host cell"/>
    <property type="evidence" value="ECO:0007669"/>
    <property type="project" value="UniProtKB-KW"/>
</dbReference>
<dbReference type="GO" id="GO:0034220">
    <property type="term" value="P:monoatomic ion transmembrane transport"/>
    <property type="evidence" value="ECO:0007669"/>
    <property type="project" value="UniProtKB-KW"/>
</dbReference>
<dbReference type="GO" id="GO:0006508">
    <property type="term" value="P:proteolysis"/>
    <property type="evidence" value="ECO:0007669"/>
    <property type="project" value="UniProtKB-KW"/>
</dbReference>
<dbReference type="GO" id="GO:0044694">
    <property type="term" value="P:symbiont genome entry into host cell via pore formation in plasma membrane"/>
    <property type="evidence" value="ECO:0007669"/>
    <property type="project" value="UniProtKB-KW"/>
</dbReference>
<dbReference type="GO" id="GO:0039520">
    <property type="term" value="P:symbiont-mediated activation of host autophagy"/>
    <property type="evidence" value="ECO:0000250"/>
    <property type="project" value="UniProtKB"/>
</dbReference>
<dbReference type="GO" id="GO:0039540">
    <property type="term" value="P:symbiont-mediated suppression of host cytoplasmic pattern recognition receptor signaling pathway via inhibition of RIG-I activity"/>
    <property type="evidence" value="ECO:0007669"/>
    <property type="project" value="UniProtKB-KW"/>
</dbReference>
<dbReference type="GO" id="GO:0039522">
    <property type="term" value="P:symbiont-mediated suppression of host mRNA export from nucleus"/>
    <property type="evidence" value="ECO:0007669"/>
    <property type="project" value="UniProtKB-KW"/>
</dbReference>
<dbReference type="GO" id="GO:0039694">
    <property type="term" value="P:viral RNA genome replication"/>
    <property type="evidence" value="ECO:0007669"/>
    <property type="project" value="InterPro"/>
</dbReference>
<dbReference type="GO" id="GO:0019062">
    <property type="term" value="P:virion attachment to host cell"/>
    <property type="evidence" value="ECO:0007669"/>
    <property type="project" value="UniProtKB-KW"/>
</dbReference>
<dbReference type="CDD" id="cd23213">
    <property type="entry name" value="Enterovirus_RdRp"/>
    <property type="match status" value="1"/>
</dbReference>
<dbReference type="CDD" id="cd00205">
    <property type="entry name" value="rhv_like"/>
    <property type="match status" value="3"/>
</dbReference>
<dbReference type="FunFam" id="1.20.960.20:FF:000001">
    <property type="entry name" value="Genome polyprotein"/>
    <property type="match status" value="1"/>
</dbReference>
<dbReference type="FunFam" id="2.40.10.10:FF:000018">
    <property type="entry name" value="Genome polyprotein"/>
    <property type="match status" value="1"/>
</dbReference>
<dbReference type="FunFam" id="2.40.10.10:FF:000020">
    <property type="entry name" value="Genome polyprotein"/>
    <property type="match status" value="1"/>
</dbReference>
<dbReference type="FunFam" id="2.40.10.10:FF:000022">
    <property type="entry name" value="Genome polyprotein"/>
    <property type="match status" value="1"/>
</dbReference>
<dbReference type="FunFam" id="2.60.120.20:FF:000001">
    <property type="entry name" value="Genome polyprotein"/>
    <property type="match status" value="1"/>
</dbReference>
<dbReference type="FunFam" id="2.60.120.20:FF:000002">
    <property type="entry name" value="Genome polyprotein"/>
    <property type="match status" value="1"/>
</dbReference>
<dbReference type="FunFam" id="2.60.120.20:FF:000004">
    <property type="entry name" value="Genome polyprotein"/>
    <property type="match status" value="1"/>
</dbReference>
<dbReference type="FunFam" id="3.30.70.270:FF:000008">
    <property type="entry name" value="Genome polyprotein"/>
    <property type="match status" value="1"/>
</dbReference>
<dbReference type="FunFam" id="4.10.80.10:FF:000001">
    <property type="entry name" value="Genome polyprotein"/>
    <property type="match status" value="1"/>
</dbReference>
<dbReference type="FunFam" id="4.10.880.10:FF:000001">
    <property type="entry name" value="Genome polyprotein"/>
    <property type="match status" value="1"/>
</dbReference>
<dbReference type="FunFam" id="4.10.880.10:FF:000002">
    <property type="entry name" value="Genome polyprotein"/>
    <property type="match status" value="1"/>
</dbReference>
<dbReference type="Gene3D" id="1.20.960.20">
    <property type="match status" value="1"/>
</dbReference>
<dbReference type="Gene3D" id="2.60.120.20">
    <property type="match status" value="3"/>
</dbReference>
<dbReference type="Gene3D" id="3.30.70.270">
    <property type="match status" value="1"/>
</dbReference>
<dbReference type="Gene3D" id="4.10.80.10">
    <property type="entry name" value="Picornavirus coat protein VP4"/>
    <property type="match status" value="1"/>
</dbReference>
<dbReference type="Gene3D" id="6.10.20.20">
    <property type="entry name" value="Poliovirus 3A protein-like"/>
    <property type="match status" value="1"/>
</dbReference>
<dbReference type="Gene3D" id="4.10.880.10">
    <property type="entry name" value="Poliovirus 3D polymerase Domain 1 (Nucleotidyltransferase)"/>
    <property type="match status" value="2"/>
</dbReference>
<dbReference type="Gene3D" id="2.40.10.10">
    <property type="entry name" value="Trypsin-like serine proteases"/>
    <property type="match status" value="4"/>
</dbReference>
<dbReference type="InterPro" id="IPR003593">
    <property type="entry name" value="AAA+_ATPase"/>
</dbReference>
<dbReference type="InterPro" id="IPR043502">
    <property type="entry name" value="DNA/RNA_pol_sf"/>
</dbReference>
<dbReference type="InterPro" id="IPR000605">
    <property type="entry name" value="Helicase_SF3_ssDNA/RNA_vir"/>
</dbReference>
<dbReference type="InterPro" id="IPR014759">
    <property type="entry name" value="Helicase_SF3_ssRNA_vir"/>
</dbReference>
<dbReference type="InterPro" id="IPR027417">
    <property type="entry name" value="P-loop_NTPase"/>
</dbReference>
<dbReference type="InterPro" id="IPR014838">
    <property type="entry name" value="P3A"/>
</dbReference>
<dbReference type="InterPro" id="IPR036203">
    <property type="entry name" value="P3A_soluble_dom"/>
</dbReference>
<dbReference type="InterPro" id="IPR044067">
    <property type="entry name" value="PCV_3C_PRO"/>
</dbReference>
<dbReference type="InterPro" id="IPR000081">
    <property type="entry name" value="Peptidase_C3"/>
</dbReference>
<dbReference type="InterPro" id="IPR000199">
    <property type="entry name" value="Peptidase_C3A/C3B_picornavir"/>
</dbReference>
<dbReference type="InterPro" id="IPR009003">
    <property type="entry name" value="Peptidase_S1_PA"/>
</dbReference>
<dbReference type="InterPro" id="IPR043504">
    <property type="entry name" value="Peptidase_S1_PA_chymotrypsin"/>
</dbReference>
<dbReference type="InterPro" id="IPR003138">
    <property type="entry name" value="Pico_P1A"/>
</dbReference>
<dbReference type="InterPro" id="IPR036988">
    <property type="entry name" value="Pico_P1A_sf"/>
</dbReference>
<dbReference type="InterPro" id="IPR002527">
    <property type="entry name" value="Pico_P2B"/>
</dbReference>
<dbReference type="InterPro" id="IPR001676">
    <property type="entry name" value="Picornavirus_capsid"/>
</dbReference>
<dbReference type="InterPro" id="IPR043128">
    <property type="entry name" value="Rev_trsase/Diguanyl_cyclase"/>
</dbReference>
<dbReference type="InterPro" id="IPR033703">
    <property type="entry name" value="Rhv-like"/>
</dbReference>
<dbReference type="InterPro" id="IPR001205">
    <property type="entry name" value="RNA-dir_pol_C"/>
</dbReference>
<dbReference type="InterPro" id="IPR007094">
    <property type="entry name" value="RNA-dir_pol_PSvirus"/>
</dbReference>
<dbReference type="InterPro" id="IPR029053">
    <property type="entry name" value="Viral_coat"/>
</dbReference>
<dbReference type="Pfam" id="PF08727">
    <property type="entry name" value="P3A"/>
    <property type="match status" value="1"/>
</dbReference>
<dbReference type="Pfam" id="PF00548">
    <property type="entry name" value="Peptidase_C3"/>
    <property type="match status" value="1"/>
</dbReference>
<dbReference type="Pfam" id="PF02226">
    <property type="entry name" value="Pico_P1A"/>
    <property type="match status" value="1"/>
</dbReference>
<dbReference type="Pfam" id="PF00947">
    <property type="entry name" value="Pico_P2A"/>
    <property type="match status" value="1"/>
</dbReference>
<dbReference type="Pfam" id="PF01552">
    <property type="entry name" value="Pico_P2B"/>
    <property type="match status" value="1"/>
</dbReference>
<dbReference type="Pfam" id="PF00680">
    <property type="entry name" value="RdRP_1"/>
    <property type="match status" value="1"/>
</dbReference>
<dbReference type="Pfam" id="PF00073">
    <property type="entry name" value="Rhv"/>
    <property type="match status" value="3"/>
</dbReference>
<dbReference type="Pfam" id="PF00910">
    <property type="entry name" value="RNA_helicase"/>
    <property type="match status" value="1"/>
</dbReference>
<dbReference type="SMART" id="SM00382">
    <property type="entry name" value="AAA"/>
    <property type="match status" value="1"/>
</dbReference>
<dbReference type="SUPFAM" id="SSF56672">
    <property type="entry name" value="DNA/RNA polymerases"/>
    <property type="match status" value="1"/>
</dbReference>
<dbReference type="SUPFAM" id="SSF52540">
    <property type="entry name" value="P-loop containing nucleoside triphosphate hydrolases"/>
    <property type="match status" value="1"/>
</dbReference>
<dbReference type="SUPFAM" id="SSF88633">
    <property type="entry name" value="Positive stranded ssRNA viruses"/>
    <property type="match status" value="2"/>
</dbReference>
<dbReference type="SUPFAM" id="SSF89043">
    <property type="entry name" value="Soluble domain of poliovirus core protein 3a"/>
    <property type="match status" value="1"/>
</dbReference>
<dbReference type="SUPFAM" id="SSF50494">
    <property type="entry name" value="Trypsin-like serine proteases"/>
    <property type="match status" value="2"/>
</dbReference>
<dbReference type="PROSITE" id="PS51874">
    <property type="entry name" value="PCV_3C_PRO"/>
    <property type="match status" value="1"/>
</dbReference>
<dbReference type="PROSITE" id="PS50507">
    <property type="entry name" value="RDRP_SSRNA_POS"/>
    <property type="match status" value="1"/>
</dbReference>
<dbReference type="PROSITE" id="PS51218">
    <property type="entry name" value="SF3_HELICASE_2"/>
    <property type="match status" value="1"/>
</dbReference>
<organism>
    <name type="scientific">Swine vesicular disease virus (strain UKG/27/72)</name>
    <name type="common">SVDV</name>
    <dbReference type="NCBI Taxonomy" id="12077"/>
    <lineage>
        <taxon>Viruses</taxon>
        <taxon>Riboviria</taxon>
        <taxon>Orthornavirae</taxon>
        <taxon>Pisuviricota</taxon>
        <taxon>Pisoniviricetes</taxon>
        <taxon>Picornavirales</taxon>
        <taxon>Picornaviridae</taxon>
        <taxon>Ensavirinae</taxon>
        <taxon>Enterovirus</taxon>
        <taxon>Enterovirus B</taxon>
    </lineage>
</organism>
<sequence>MGAQVSTQKTGAHETSLSAAGNSVIHYTNINYYKDAASNSANRQDFTQDPGKFTEPVKDIMVKSMPALNSPSAEECGYSDRVRSITLGNSTITTQECANVVVGYGVWPTYLKDEEATAEDQPTQPDVATCRFYTLESVMWQQSSPGWWWKFPDALSNMGLFGQNMQYHYLGRAGYTIHVQCNASKFHQGCLLVVCVPEAEMGCATLANKPDPKSLSKGEIANMFESQNSTGETAVQANVINAGMGVGVGNLTIFPHQWINLRTNNSATIVMPYINSVPMDNMFRHNNFTLMVIPFAPLSYSTGATTYVPITVTVAPMCAEYNGLRLAGKQGLPTLSTPGSNQFLTSDDFQSPSAMPQFDVTPEMDIPGQVNNLMEIAEVDSVVPVNNTEGKVMSIEAYQIPVQSNPTNGSQVFGFPLTPGANSVLNRTLLGEILNYYAHWSGSIKLTFMFCGSAMATGKFLLAYSPPGAGAPTTRKEAMLGTHVIWDVGLQSSCVLCIPWISQTHYRYVVMDEYTAGGYITCWYQTNIVVPADAQSDCKILCFVSACNDFSVRMLKDTPFIKQDNFFQGPPGEVMGRAIARVADTIGSGPVNSESIPALTAAETGHTSQVVPSDTMQTRHVKNYHSRSESTVENFLCRSACVFYTTYKNHDSDGDNFAYWVINTRQVAQLRRKLEMFTYARFDLELTFVITSTQEQPTVRGQDAPVLTHQIMYVPPGGPVPTKVNSYSWQTSTNPSVFWTEGSAPPRMSIPFIGIGNAYSMFYDGWARFDKQGTYGISTLNNMGTLYMRHVNDGGPGPIVSTVRIYFKPKHVKTWVPRPPRLCQYQKAGNVNFEPTGVTEGRTDITTMKTTGAFGQQSGAVYVGNYRVVNRHLATRADWQNCVWEDYNRDLLVSTTTAHGCDTIARCDCTAGVYFCASRNKHYPVTFEGPGLVEVQESEYYPKKYQSHVLLAAGFAEPGDCGGILRCQHGVIGIVTVGGEGVVGFADVRDLLWLEDDAMEQGVRDYVEQLGNCFGSGFTNQICEQVTLLKESLIGQDSILEKSLKALVKIVSALVIVVRNHDDLITVTATLALIGCTTSPWRWLKQKVSQYYGIPMAERQNSGWLKKFTEMTNACKGMEWIAIKIQKFIEWLKVKILPEVKEKHEFLNRLKQLPLLESQIATIEQSAPSQSDQEQLFSNVQYFAHYCRKYAPLYAAEAKRVFSLEKKMSNYIQFKSKCRIEPVCLLLHGSPGAGKSVATNLIGRSLAEKLNSSVYSLPPDPDHFDGYKQQAVVIMDDLCQNPDGKDVSLFCQMVSSVDFVPPMAALEEKGILFTSPFVLASTNAGSVNAPTVSDSRALVRRFHFDMNIEVVSMYSQNGKINMPMAVKTCDEECCPVNFKKCCPLVCGKAIQFIDRRTQVRYSLDMLVTEMFREYNHRHSVGATLEALFQGPPVYREIKISVAPETPPPPAVADLLKSVDSEAVREYCKEKGWLIPEVDSTLQIEKHVNRAFICLQALTTFVSVAGIIYIIYKLFAGFQGAYTGMPNQKPRVPTLRQAKVQGPAFEFAVAMMKRNASTVKTEYGEFTMLGIYDRWAVLPRHAKPGPTILMNDQVVGVLDAKELVDKDGTNLELTLLKLNRNEKFRDIRGFLAREEVEVNEAVLAINTSKFPNMYIPVGRVTDYGFLNLGGTPTKRMLMYNFPTRAGQCGGVLMSTGKVLGIHVGGNGHQGFSAALLRHYFNEEQGEIEFIESSKDAGFPVINTPSKTKLEPSVFHHVFEGNKEPAVLRNGDPRLKANFEEAIFSKYIGNVNTHVDEYMMEAVDHYAGQLATLDISTEPMKLEDAVYGTEGLEALDLTTSAGYPYVALGIKKRDILSKKTRDLTKLKECMDKYGLNLPMVTYVKDELRSADKVAKGKSRLIEASSLNDSVAMRQTFGNLYKTFHLNPGIVTGSAVGCDPDVFWSKIPVMLDGHLIAFDYSGYDASLSPVWFTCLKLLLEKLGYTNKETNYIDYLCNSHHLYRDKHYFVRGGMPSGCSGTSIFNSMINNIIIRTLMLKVYKGIDLDQFRMIAYGDDVIASYPWPIDASLLAEAGKDYGLIMTPADKGECFNEVTWTNVTFLKRYFRADEQYPFLVHPVMPMKDIHESIRWTKDPKNTQDHVRSLCLLAWHNGEHEYEEFIRKIRSVRVGRCLSLPAFSTLRRKWLDSF</sequence>